<sequence>MYAAFLGLGMSVAILGPTFQDLAENVNRNISSLSLIFVGRATGFLSGTMIGGVLFDHINQFFLLGASMVATAAGLYLIPFCKTAVLLIITMSVFGASVGVVDTGANVLILDLWGDKGAPQMQALHFSFALGAFLAPLLAKLAWGTAPAQNHTESDLDTLMLNRSSNGTSDSVFAVPDDMNLLWAYASIGTFILVVSVFLFGLFCKKHSRQKKPRASAEGARRAKYHRALLCLLFLFFFFYVGAEITYGSYIFSFATTHVGMEESEAAGLNSIFWGTFAACRGLAIFFATFLQPGTMIVLSNIGSLVSCFFLVLFDKSPLCLWIATSVYGASMAATFPSGISWIEQYTTLTGKSAAFFVIGSALGDMAIPAVIGILQGHYPDLPVVLYTCLGSAIFTAILFPVMYKLATLPLKREDQKALPTSSRL</sequence>
<accession>Q8VCV9</accession>
<feature type="chain" id="PRO_0000294511" description="Sodium-dependent glucose transporter 1A">
    <location>
        <begin position="1"/>
        <end position="425"/>
    </location>
</feature>
<feature type="transmembrane region" description="Helical" evidence="3">
    <location>
        <begin position="35"/>
        <end position="55"/>
    </location>
</feature>
<feature type="transmembrane region" description="Helical" evidence="3">
    <location>
        <begin position="61"/>
        <end position="81"/>
    </location>
</feature>
<feature type="transmembrane region" description="Helical" evidence="3">
    <location>
        <begin position="84"/>
        <end position="104"/>
    </location>
</feature>
<feature type="transmembrane region" description="Helical" evidence="3">
    <location>
        <begin position="123"/>
        <end position="143"/>
    </location>
</feature>
<feature type="transmembrane region" description="Helical" evidence="3">
    <location>
        <begin position="183"/>
        <end position="203"/>
    </location>
</feature>
<feature type="transmembrane region" description="Helical" evidence="3">
    <location>
        <begin position="228"/>
        <end position="248"/>
    </location>
</feature>
<feature type="transmembrane region" description="Helical" evidence="3">
    <location>
        <begin position="271"/>
        <end position="291"/>
    </location>
</feature>
<feature type="transmembrane region" description="Helical" evidence="3">
    <location>
        <begin position="294"/>
        <end position="314"/>
    </location>
</feature>
<feature type="transmembrane region" description="Helical" evidence="3">
    <location>
        <begin position="320"/>
        <end position="340"/>
    </location>
</feature>
<feature type="transmembrane region" description="Helical" evidence="3">
    <location>
        <begin position="355"/>
        <end position="375"/>
    </location>
</feature>
<feature type="transmembrane region" description="Helical" evidence="3">
    <location>
        <begin position="382"/>
        <end position="402"/>
    </location>
</feature>
<feature type="sequence conflict" description="In Ref. 1; BAC41015." evidence="4" ref="1">
    <original>N</original>
    <variation>H</variation>
    <location>
        <position position="27"/>
    </location>
</feature>
<proteinExistence type="evidence at transcript level"/>
<reference key="1">
    <citation type="journal article" date="2005" name="Science">
        <title>The transcriptional landscape of the mammalian genome.</title>
        <authorList>
            <person name="Carninci P."/>
            <person name="Kasukawa T."/>
            <person name="Katayama S."/>
            <person name="Gough J."/>
            <person name="Frith M.C."/>
            <person name="Maeda N."/>
            <person name="Oyama R."/>
            <person name="Ravasi T."/>
            <person name="Lenhard B."/>
            <person name="Wells C."/>
            <person name="Kodzius R."/>
            <person name="Shimokawa K."/>
            <person name="Bajic V.B."/>
            <person name="Brenner S.E."/>
            <person name="Batalov S."/>
            <person name="Forrest A.R."/>
            <person name="Zavolan M."/>
            <person name="Davis M.J."/>
            <person name="Wilming L.G."/>
            <person name="Aidinis V."/>
            <person name="Allen J.E."/>
            <person name="Ambesi-Impiombato A."/>
            <person name="Apweiler R."/>
            <person name="Aturaliya R.N."/>
            <person name="Bailey T.L."/>
            <person name="Bansal M."/>
            <person name="Baxter L."/>
            <person name="Beisel K.W."/>
            <person name="Bersano T."/>
            <person name="Bono H."/>
            <person name="Chalk A.M."/>
            <person name="Chiu K.P."/>
            <person name="Choudhary V."/>
            <person name="Christoffels A."/>
            <person name="Clutterbuck D.R."/>
            <person name="Crowe M.L."/>
            <person name="Dalla E."/>
            <person name="Dalrymple B.P."/>
            <person name="de Bono B."/>
            <person name="Della Gatta G."/>
            <person name="di Bernardo D."/>
            <person name="Down T."/>
            <person name="Engstrom P."/>
            <person name="Fagiolini M."/>
            <person name="Faulkner G."/>
            <person name="Fletcher C.F."/>
            <person name="Fukushima T."/>
            <person name="Furuno M."/>
            <person name="Futaki S."/>
            <person name="Gariboldi M."/>
            <person name="Georgii-Hemming P."/>
            <person name="Gingeras T.R."/>
            <person name="Gojobori T."/>
            <person name="Green R.E."/>
            <person name="Gustincich S."/>
            <person name="Harbers M."/>
            <person name="Hayashi Y."/>
            <person name="Hensch T.K."/>
            <person name="Hirokawa N."/>
            <person name="Hill D."/>
            <person name="Huminiecki L."/>
            <person name="Iacono M."/>
            <person name="Ikeo K."/>
            <person name="Iwama A."/>
            <person name="Ishikawa T."/>
            <person name="Jakt M."/>
            <person name="Kanapin A."/>
            <person name="Katoh M."/>
            <person name="Kawasawa Y."/>
            <person name="Kelso J."/>
            <person name="Kitamura H."/>
            <person name="Kitano H."/>
            <person name="Kollias G."/>
            <person name="Krishnan S.P."/>
            <person name="Kruger A."/>
            <person name="Kummerfeld S.K."/>
            <person name="Kurochkin I.V."/>
            <person name="Lareau L.F."/>
            <person name="Lazarevic D."/>
            <person name="Lipovich L."/>
            <person name="Liu J."/>
            <person name="Liuni S."/>
            <person name="McWilliam S."/>
            <person name="Madan Babu M."/>
            <person name="Madera M."/>
            <person name="Marchionni L."/>
            <person name="Matsuda H."/>
            <person name="Matsuzawa S."/>
            <person name="Miki H."/>
            <person name="Mignone F."/>
            <person name="Miyake S."/>
            <person name="Morris K."/>
            <person name="Mottagui-Tabar S."/>
            <person name="Mulder N."/>
            <person name="Nakano N."/>
            <person name="Nakauchi H."/>
            <person name="Ng P."/>
            <person name="Nilsson R."/>
            <person name="Nishiguchi S."/>
            <person name="Nishikawa S."/>
            <person name="Nori F."/>
            <person name="Ohara O."/>
            <person name="Okazaki Y."/>
            <person name="Orlando V."/>
            <person name="Pang K.C."/>
            <person name="Pavan W.J."/>
            <person name="Pavesi G."/>
            <person name="Pesole G."/>
            <person name="Petrovsky N."/>
            <person name="Piazza S."/>
            <person name="Reed J."/>
            <person name="Reid J.F."/>
            <person name="Ring B.Z."/>
            <person name="Ringwald M."/>
            <person name="Rost B."/>
            <person name="Ruan Y."/>
            <person name="Salzberg S.L."/>
            <person name="Sandelin A."/>
            <person name="Schneider C."/>
            <person name="Schoenbach C."/>
            <person name="Sekiguchi K."/>
            <person name="Semple C.A."/>
            <person name="Seno S."/>
            <person name="Sessa L."/>
            <person name="Sheng Y."/>
            <person name="Shibata Y."/>
            <person name="Shimada H."/>
            <person name="Shimada K."/>
            <person name="Silva D."/>
            <person name="Sinclair B."/>
            <person name="Sperling S."/>
            <person name="Stupka E."/>
            <person name="Sugiura K."/>
            <person name="Sultana R."/>
            <person name="Takenaka Y."/>
            <person name="Taki K."/>
            <person name="Tammoja K."/>
            <person name="Tan S.L."/>
            <person name="Tang S."/>
            <person name="Taylor M.S."/>
            <person name="Tegner J."/>
            <person name="Teichmann S.A."/>
            <person name="Ueda H.R."/>
            <person name="van Nimwegen E."/>
            <person name="Verardo R."/>
            <person name="Wei C.L."/>
            <person name="Yagi K."/>
            <person name="Yamanishi H."/>
            <person name="Zabarovsky E."/>
            <person name="Zhu S."/>
            <person name="Zimmer A."/>
            <person name="Hide W."/>
            <person name="Bult C."/>
            <person name="Grimmond S.M."/>
            <person name="Teasdale R.D."/>
            <person name="Liu E.T."/>
            <person name="Brusic V."/>
            <person name="Quackenbush J."/>
            <person name="Wahlestedt C."/>
            <person name="Mattick J.S."/>
            <person name="Hume D.A."/>
            <person name="Kai C."/>
            <person name="Sasaki D."/>
            <person name="Tomaru Y."/>
            <person name="Fukuda S."/>
            <person name="Kanamori-Katayama M."/>
            <person name="Suzuki M."/>
            <person name="Aoki J."/>
            <person name="Arakawa T."/>
            <person name="Iida J."/>
            <person name="Imamura K."/>
            <person name="Itoh M."/>
            <person name="Kato T."/>
            <person name="Kawaji H."/>
            <person name="Kawagashira N."/>
            <person name="Kawashima T."/>
            <person name="Kojima M."/>
            <person name="Kondo S."/>
            <person name="Konno H."/>
            <person name="Nakano K."/>
            <person name="Ninomiya N."/>
            <person name="Nishio T."/>
            <person name="Okada M."/>
            <person name="Plessy C."/>
            <person name="Shibata K."/>
            <person name="Shiraki T."/>
            <person name="Suzuki S."/>
            <person name="Tagami M."/>
            <person name="Waki K."/>
            <person name="Watahiki A."/>
            <person name="Okamura-Oho Y."/>
            <person name="Suzuki H."/>
            <person name="Kawai J."/>
            <person name="Hayashizaki Y."/>
        </authorList>
    </citation>
    <scope>NUCLEOTIDE SEQUENCE [LARGE SCALE MRNA]</scope>
    <source>
        <tissue>Kidney</tissue>
    </source>
</reference>
<reference key="2">
    <citation type="journal article" date="2004" name="Genome Res.">
        <title>The status, quality, and expansion of the NIH full-length cDNA project: the Mammalian Gene Collection (MGC).</title>
        <authorList>
            <consortium name="The MGC Project Team"/>
        </authorList>
    </citation>
    <scope>NUCLEOTIDE SEQUENCE [LARGE SCALE MRNA]</scope>
    <source>
        <strain>FVB/N</strain>
        <tissue>Liver</tissue>
    </source>
</reference>
<keyword id="KW-1003">Cell membrane</keyword>
<keyword id="KW-0406">Ion transport</keyword>
<keyword id="KW-0472">Membrane</keyword>
<keyword id="KW-1185">Reference proteome</keyword>
<keyword id="KW-0915">Sodium</keyword>
<keyword id="KW-0739">Sodium transport</keyword>
<keyword id="KW-0762">Sugar transport</keyword>
<keyword id="KW-0769">Symport</keyword>
<keyword id="KW-0812">Transmembrane</keyword>
<keyword id="KW-1133">Transmembrane helix</keyword>
<keyword id="KW-0813">Transport</keyword>
<gene>
    <name evidence="5" type="primary">Mfsd4b1</name>
    <name type="synonym">Naglt1a</name>
</gene>
<evidence type="ECO:0000250" key="1"/>
<evidence type="ECO:0000250" key="2">
    <source>
        <dbReference type="UniProtKB" id="Q80T22"/>
    </source>
</evidence>
<evidence type="ECO:0000255" key="3"/>
<evidence type="ECO:0000305" key="4"/>
<evidence type="ECO:0000312" key="5">
    <source>
        <dbReference type="MGI" id="MGI:2143575"/>
    </source>
</evidence>
<organism>
    <name type="scientific">Mus musculus</name>
    <name type="common">Mouse</name>
    <dbReference type="NCBI Taxonomy" id="10090"/>
    <lineage>
        <taxon>Eukaryota</taxon>
        <taxon>Metazoa</taxon>
        <taxon>Chordata</taxon>
        <taxon>Craniata</taxon>
        <taxon>Vertebrata</taxon>
        <taxon>Euteleostomi</taxon>
        <taxon>Mammalia</taxon>
        <taxon>Eutheria</taxon>
        <taxon>Euarchontoglires</taxon>
        <taxon>Glires</taxon>
        <taxon>Rodentia</taxon>
        <taxon>Myomorpha</taxon>
        <taxon>Muroidea</taxon>
        <taxon>Muridae</taxon>
        <taxon>Murinae</taxon>
        <taxon>Mus</taxon>
        <taxon>Mus</taxon>
    </lineage>
</organism>
<comment type="function">
    <text evidence="2">May function as a sodium-dependent glucose transporter. Potential channels for urea in the inner medulla of kidney.</text>
</comment>
<comment type="subcellular location">
    <subcellularLocation>
        <location evidence="2">Apical cell membrane</location>
        <topology evidence="1">Multi-pass membrane protein</topology>
    </subcellularLocation>
</comment>
<comment type="similarity">
    <text evidence="4">Belongs to the major facilitator superfamily.</text>
</comment>
<comment type="sequence caution" evidence="4">
    <conflict type="erroneous initiation">
        <sequence resource="EMBL-CDS" id="AAH18406"/>
    </conflict>
</comment>
<comment type="sequence caution" evidence="4">
    <conflict type="erroneous initiation">
        <sequence resource="EMBL-CDS" id="BAC41015"/>
    </conflict>
</comment>
<dbReference type="EMBL" id="AK089961">
    <property type="protein sequence ID" value="BAC41015.1"/>
    <property type="status" value="ALT_INIT"/>
    <property type="molecule type" value="mRNA"/>
</dbReference>
<dbReference type="EMBL" id="BC018406">
    <property type="protein sequence ID" value="AAH18406.1"/>
    <property type="status" value="ALT_INIT"/>
    <property type="molecule type" value="mRNA"/>
</dbReference>
<dbReference type="CCDS" id="CCDS35884.2"/>
<dbReference type="RefSeq" id="NP_659070.2">
    <property type="nucleotide sequence ID" value="NM_144821.4"/>
</dbReference>
<dbReference type="SMR" id="Q8VCV9"/>
<dbReference type="STRING" id="10090.ENSMUSP00000128324"/>
<dbReference type="iPTMnet" id="Q8VCV9"/>
<dbReference type="PhosphoSitePlus" id="Q8VCV9"/>
<dbReference type="jPOST" id="Q8VCV9"/>
<dbReference type="PaxDb" id="10090-ENSMUSP00000128324"/>
<dbReference type="DNASU" id="215929"/>
<dbReference type="Ensembl" id="ENSMUST00000163705.3">
    <property type="protein sequence ID" value="ENSMUSP00000128324.3"/>
    <property type="gene ID" value="ENSMUSG00000038522.8"/>
</dbReference>
<dbReference type="GeneID" id="215929"/>
<dbReference type="KEGG" id="mmu:215929"/>
<dbReference type="UCSC" id="uc007ewl.2">
    <property type="organism name" value="mouse"/>
</dbReference>
<dbReference type="AGR" id="MGI:2143575"/>
<dbReference type="CTD" id="215929"/>
<dbReference type="MGI" id="MGI:2143575">
    <property type="gene designation" value="Mfsd4b1"/>
</dbReference>
<dbReference type="VEuPathDB" id="HostDB:ENSMUSG00000038522"/>
<dbReference type="eggNOG" id="ENOG502R5UW">
    <property type="taxonomic scope" value="Eukaryota"/>
</dbReference>
<dbReference type="GeneTree" id="ENSGT00530000063320"/>
<dbReference type="HOGENOM" id="CLU_028923_1_0_1"/>
<dbReference type="InParanoid" id="Q8VCV9"/>
<dbReference type="OMA" id="HADVQIT"/>
<dbReference type="OrthoDB" id="546893at2759"/>
<dbReference type="PhylomeDB" id="Q8VCV9"/>
<dbReference type="TreeFam" id="TF314613"/>
<dbReference type="BioGRID-ORCS" id="215929">
    <property type="hits" value="2 hits in 77 CRISPR screens"/>
</dbReference>
<dbReference type="ChiTaRS" id="Mfsd4b1">
    <property type="organism name" value="mouse"/>
</dbReference>
<dbReference type="PRO" id="PR:Q8VCV9"/>
<dbReference type="Proteomes" id="UP000000589">
    <property type="component" value="Chromosome 10"/>
</dbReference>
<dbReference type="RNAct" id="Q8VCV9">
    <property type="molecule type" value="protein"/>
</dbReference>
<dbReference type="Bgee" id="ENSMUSG00000038522">
    <property type="expression patterns" value="Expressed in right kidney and 69 other cell types or tissues"/>
</dbReference>
<dbReference type="GO" id="GO:0016324">
    <property type="term" value="C:apical plasma membrane"/>
    <property type="evidence" value="ECO:0007669"/>
    <property type="project" value="UniProtKB-SubCell"/>
</dbReference>
<dbReference type="GO" id="GO:0015293">
    <property type="term" value="F:symporter activity"/>
    <property type="evidence" value="ECO:0007669"/>
    <property type="project" value="UniProtKB-KW"/>
</dbReference>
<dbReference type="GO" id="GO:0006814">
    <property type="term" value="P:sodium ion transport"/>
    <property type="evidence" value="ECO:0007669"/>
    <property type="project" value="UniProtKB-KW"/>
</dbReference>
<dbReference type="FunFam" id="1.20.1250.20:FF:000408">
    <property type="entry name" value="Major facilitator superfamily domain containing 4B"/>
    <property type="match status" value="1"/>
</dbReference>
<dbReference type="Gene3D" id="1.20.1250.20">
    <property type="entry name" value="MFS general substrate transporter like domains"/>
    <property type="match status" value="2"/>
</dbReference>
<dbReference type="InterPro" id="IPR011701">
    <property type="entry name" value="MFS"/>
</dbReference>
<dbReference type="InterPro" id="IPR036259">
    <property type="entry name" value="MFS_trans_sf"/>
</dbReference>
<dbReference type="PANTHER" id="PTHR23121">
    <property type="entry name" value="SODIUM-DEPENDENT GLUCOSE TRANSPORTER 1"/>
    <property type="match status" value="1"/>
</dbReference>
<dbReference type="PANTHER" id="PTHR23121:SF17">
    <property type="entry name" value="SODIUM-DEPENDENT GLUCOSE TRANSPORTER 1A"/>
    <property type="match status" value="1"/>
</dbReference>
<dbReference type="Pfam" id="PF07690">
    <property type="entry name" value="MFS_1"/>
    <property type="match status" value="1"/>
</dbReference>
<dbReference type="SUPFAM" id="SSF103473">
    <property type="entry name" value="MFS general substrate transporter"/>
    <property type="match status" value="1"/>
</dbReference>
<protein>
    <recommendedName>
        <fullName evidence="2">Sodium-dependent glucose transporter 1A</fullName>
    </recommendedName>
    <alternativeName>
        <fullName>Major facilitator superfamily domain-containing protein 4B1</fullName>
    </alternativeName>
</protein>
<name>MF4B1_MOUSE</name>